<reference evidence="5" key="1">
    <citation type="submission" date="2007-03" db="EMBL/GenBank/DDBJ databases">
        <title>Annotation of Culex pipiens quinquefasciatus.</title>
        <authorList>
            <consortium name="The Broad Institute Genome Sequencing Platform"/>
            <person name="Atkinson P.W."/>
            <person name="Hemingway J."/>
            <person name="Christensen B.M."/>
            <person name="Higgs S."/>
            <person name="Kodira C.D."/>
            <person name="Hannick L.I."/>
            <person name="Megy K."/>
            <person name="O'Leary S.B."/>
            <person name="Pearson M."/>
            <person name="Haas B.J."/>
            <person name="Mauceli E."/>
            <person name="Wortman J.R."/>
            <person name="Lee N.H."/>
            <person name="Guigo R."/>
            <person name="Stanke M."/>
            <person name="Alvarado L."/>
            <person name="Amedeo P."/>
            <person name="Antoine C.H."/>
            <person name="Arensburger P."/>
            <person name="Bidwell S.L."/>
            <person name="Crawford M."/>
            <person name="Camaro F."/>
            <person name="Devon K."/>
            <person name="Engels R."/>
            <person name="Hammond M."/>
            <person name="Howarth C."/>
            <person name="Koehrsen M."/>
            <person name="Lawson D."/>
            <person name="Montgomery P."/>
            <person name="Nene V."/>
            <person name="Nusbaum C."/>
            <person name="Puiu D."/>
            <person name="Romero-Severson J."/>
            <person name="Severson D.W."/>
            <person name="Shumway M."/>
            <person name="Sisk P."/>
            <person name="Stolte C."/>
            <person name="Zeng Q."/>
            <person name="Eisenstadt E."/>
            <person name="Fraser-Liggett C.M."/>
            <person name="Strausberg R."/>
            <person name="Galagan J."/>
            <person name="Birren B."/>
            <person name="Collins F.H."/>
        </authorList>
    </citation>
    <scope>NUCLEOTIDE SEQUENCE [LARGE SCALE GENOMIC DNA]</scope>
    <source>
        <strain evidence="5">JHB</strain>
    </source>
</reference>
<organism>
    <name type="scientific">Culex quinquefasciatus</name>
    <name type="common">Southern house mosquito</name>
    <name type="synonym">Culex pungens</name>
    <dbReference type="NCBI Taxonomy" id="7176"/>
    <lineage>
        <taxon>Eukaryota</taxon>
        <taxon>Metazoa</taxon>
        <taxon>Ecdysozoa</taxon>
        <taxon>Arthropoda</taxon>
        <taxon>Hexapoda</taxon>
        <taxon>Insecta</taxon>
        <taxon>Pterygota</taxon>
        <taxon>Neoptera</taxon>
        <taxon>Endopterygota</taxon>
        <taxon>Diptera</taxon>
        <taxon>Nematocera</taxon>
        <taxon>Culicoidea</taxon>
        <taxon>Culicidae</taxon>
        <taxon>Culicinae</taxon>
        <taxon>Culicini</taxon>
        <taxon>Culex</taxon>
        <taxon>Culex</taxon>
    </lineage>
</organism>
<proteinExistence type="inferred from homology"/>
<accession>B0WI30</accession>
<feature type="chain" id="PRO_0000400833" description="Protein king tubby 2">
    <location>
        <begin position="1"/>
        <end position="422"/>
    </location>
</feature>
<feature type="region of interest" description="Disordered" evidence="3">
    <location>
        <begin position="49"/>
        <end position="169"/>
    </location>
</feature>
<feature type="compositionally biased region" description="Low complexity" evidence="3">
    <location>
        <begin position="57"/>
        <end position="81"/>
    </location>
</feature>
<dbReference type="EMBL" id="DS231941">
    <property type="protein sequence ID" value="EDS28112.1"/>
    <property type="status" value="ALT_SEQ"/>
    <property type="molecule type" value="Genomic_DNA"/>
</dbReference>
<dbReference type="RefSeq" id="XP_001848364.1">
    <property type="nucleotide sequence ID" value="XM_001848312.1"/>
</dbReference>
<dbReference type="SMR" id="B0WI30"/>
<dbReference type="FunCoup" id="B0WI30">
    <property type="interactions" value="186"/>
</dbReference>
<dbReference type="STRING" id="7176.B0WI30"/>
<dbReference type="KEGG" id="cqu:CpipJ_CPIJ006491"/>
<dbReference type="VEuPathDB" id="VectorBase:CPIJ017614"/>
<dbReference type="VEuPathDB" id="VectorBase:CQUJHB007753"/>
<dbReference type="HOGENOM" id="CLU_028236_1_1_1"/>
<dbReference type="InParanoid" id="B0WI30"/>
<dbReference type="OrthoDB" id="8775810at2759"/>
<dbReference type="Proteomes" id="UP000002320">
    <property type="component" value="Unassembled WGS sequence"/>
</dbReference>
<dbReference type="GO" id="GO:0005929">
    <property type="term" value="C:cilium"/>
    <property type="evidence" value="ECO:0007669"/>
    <property type="project" value="TreeGrafter"/>
</dbReference>
<dbReference type="GO" id="GO:0005737">
    <property type="term" value="C:cytoplasm"/>
    <property type="evidence" value="ECO:0000250"/>
    <property type="project" value="UniProtKB"/>
</dbReference>
<dbReference type="GO" id="GO:0005634">
    <property type="term" value="C:nucleus"/>
    <property type="evidence" value="ECO:0000250"/>
    <property type="project" value="UniProtKB"/>
</dbReference>
<dbReference type="GO" id="GO:0061512">
    <property type="term" value="P:protein localization to cilium"/>
    <property type="evidence" value="ECO:0007669"/>
    <property type="project" value="TreeGrafter"/>
</dbReference>
<dbReference type="FunFam" id="3.20.90.10:FF:000001">
    <property type="entry name" value="Tubby-like protein"/>
    <property type="match status" value="1"/>
</dbReference>
<dbReference type="Gene3D" id="3.20.90.10">
    <property type="entry name" value="Tubby Protein, Chain A"/>
    <property type="match status" value="1"/>
</dbReference>
<dbReference type="InterPro" id="IPR025659">
    <property type="entry name" value="Tubby-like_C"/>
</dbReference>
<dbReference type="InterPro" id="IPR000007">
    <property type="entry name" value="Tubby_C"/>
</dbReference>
<dbReference type="InterPro" id="IPR018066">
    <property type="entry name" value="Tubby_C_CS"/>
</dbReference>
<dbReference type="PANTHER" id="PTHR16517:SF7">
    <property type="entry name" value="PROTEIN KING TUBBY"/>
    <property type="match status" value="1"/>
</dbReference>
<dbReference type="PANTHER" id="PTHR16517">
    <property type="entry name" value="TUBBY-RELATED"/>
    <property type="match status" value="1"/>
</dbReference>
<dbReference type="Pfam" id="PF01167">
    <property type="entry name" value="Tub"/>
    <property type="match status" value="1"/>
</dbReference>
<dbReference type="PRINTS" id="PR01573">
    <property type="entry name" value="SUPERTUBBY"/>
</dbReference>
<dbReference type="SUPFAM" id="SSF54518">
    <property type="entry name" value="Tubby C-terminal domain-like"/>
    <property type="match status" value="1"/>
</dbReference>
<dbReference type="PROSITE" id="PS01200">
    <property type="entry name" value="TUB_1"/>
    <property type="match status" value="1"/>
</dbReference>
<dbReference type="PROSITE" id="PS01201">
    <property type="entry name" value="TUB_2"/>
    <property type="match status" value="1"/>
</dbReference>
<gene>
    <name type="primary">king-tubby2</name>
    <name type="ORF">CPIJ006491</name>
</gene>
<comment type="subcellular location">
    <subcellularLocation>
        <location evidence="1">Cytoplasm</location>
    </subcellularLocation>
    <subcellularLocation>
        <location evidence="1">Nucleus</location>
    </subcellularLocation>
</comment>
<comment type="similarity">
    <text evidence="2">Belongs to the TUB family.</text>
</comment>
<comment type="sequence caution" evidence="4">
    <conflict type="erroneous gene model prediction">
        <sequence resource="EMBL-CDS" id="EDS28112"/>
    </conflict>
</comment>
<sequence>MEAYIRQKRATPGMVQASDLQLVRPMSAVNRNGREVHAYDGPMQFMMSPSNPDQIISSGSPTTVTATGTTTGSVTTTPTSPYSDATLEKLTPSSQDSEDEESTPVDILPSSNSFDRHSDGHLTHSAPISPALNNNVSRDSQQDSGSSGNLKSMEHSSPQASGHNDAEGDVAGPIEQWVTQPAAQGVLYKCRITRDRKGMDRGLFPIYYLHLERDYGKRLFCLAGRKRKKSKTSNYIISCDPTDLSRQADGFVGKLRSNVFGTTFFVYDNGKKDDPVSPRLDLAVVIYDTNILGFKGPRNMTVLLPGMTEDDQRVKINSSDSHGQGLLDSWKSKHMDNVVELHNKTPIWNDETQSYVLNFHGRVTQASVKNFQLVHDSDPDYIVMQFGRTSDDIFTMDFRYPLCAFQAFAIALSSFDGKLACE</sequence>
<keyword id="KW-0963">Cytoplasm</keyword>
<keyword id="KW-0539">Nucleus</keyword>
<keyword id="KW-1185">Reference proteome</keyword>
<protein>
    <recommendedName>
        <fullName>Protein king tubby 2</fullName>
    </recommendedName>
</protein>
<evidence type="ECO:0000250" key="1">
    <source>
        <dbReference type="UniProtKB" id="Q86PC9"/>
    </source>
</evidence>
<evidence type="ECO:0000255" key="2"/>
<evidence type="ECO:0000256" key="3">
    <source>
        <dbReference type="SAM" id="MobiDB-lite"/>
    </source>
</evidence>
<evidence type="ECO:0000305" key="4"/>
<evidence type="ECO:0000312" key="5">
    <source>
        <dbReference type="EMBL" id="EDS28112.1"/>
    </source>
</evidence>
<name>TULP2_CULQU</name>